<organism>
    <name type="scientific">Renibacterium salmoninarum (strain ATCC 33209 / DSM 20767 / JCM 11484 / NBRC 15589 / NCIMB 2235)</name>
    <dbReference type="NCBI Taxonomy" id="288705"/>
    <lineage>
        <taxon>Bacteria</taxon>
        <taxon>Bacillati</taxon>
        <taxon>Actinomycetota</taxon>
        <taxon>Actinomycetes</taxon>
        <taxon>Micrococcales</taxon>
        <taxon>Micrococcaceae</taxon>
        <taxon>Renibacterium</taxon>
    </lineage>
</organism>
<keyword id="KW-0028">Amino-acid biosynthesis</keyword>
<keyword id="KW-0100">Branched-chain amino acid biosynthesis</keyword>
<keyword id="KW-0460">Magnesium</keyword>
<keyword id="KW-0479">Metal-binding</keyword>
<keyword id="KW-0521">NADP</keyword>
<keyword id="KW-0560">Oxidoreductase</keyword>
<keyword id="KW-1185">Reference proteome</keyword>
<proteinExistence type="inferred from homology"/>
<dbReference type="EC" id="1.1.1.86" evidence="1"/>
<dbReference type="EMBL" id="CP000910">
    <property type="protein sequence ID" value="ABY22783.1"/>
    <property type="molecule type" value="Genomic_DNA"/>
</dbReference>
<dbReference type="RefSeq" id="WP_012244474.1">
    <property type="nucleotide sequence ID" value="NC_010168.1"/>
</dbReference>
<dbReference type="SMR" id="A9WP08"/>
<dbReference type="STRING" id="288705.RSal33209_1045"/>
<dbReference type="KEGG" id="rsa:RSal33209_1045"/>
<dbReference type="eggNOG" id="COG0059">
    <property type="taxonomic scope" value="Bacteria"/>
</dbReference>
<dbReference type="HOGENOM" id="CLU_033821_0_1_11"/>
<dbReference type="UniPathway" id="UPA00047">
    <property type="reaction ID" value="UER00056"/>
</dbReference>
<dbReference type="UniPathway" id="UPA00049">
    <property type="reaction ID" value="UER00060"/>
</dbReference>
<dbReference type="Proteomes" id="UP000002007">
    <property type="component" value="Chromosome"/>
</dbReference>
<dbReference type="GO" id="GO:0005829">
    <property type="term" value="C:cytosol"/>
    <property type="evidence" value="ECO:0007669"/>
    <property type="project" value="TreeGrafter"/>
</dbReference>
<dbReference type="GO" id="GO:0004455">
    <property type="term" value="F:ketol-acid reductoisomerase activity"/>
    <property type="evidence" value="ECO:0007669"/>
    <property type="project" value="UniProtKB-UniRule"/>
</dbReference>
<dbReference type="GO" id="GO:0000287">
    <property type="term" value="F:magnesium ion binding"/>
    <property type="evidence" value="ECO:0007669"/>
    <property type="project" value="UniProtKB-UniRule"/>
</dbReference>
<dbReference type="GO" id="GO:0050661">
    <property type="term" value="F:NADP binding"/>
    <property type="evidence" value="ECO:0007669"/>
    <property type="project" value="InterPro"/>
</dbReference>
<dbReference type="GO" id="GO:0009097">
    <property type="term" value="P:isoleucine biosynthetic process"/>
    <property type="evidence" value="ECO:0007669"/>
    <property type="project" value="UniProtKB-UniRule"/>
</dbReference>
<dbReference type="GO" id="GO:0009099">
    <property type="term" value="P:L-valine biosynthetic process"/>
    <property type="evidence" value="ECO:0007669"/>
    <property type="project" value="UniProtKB-UniRule"/>
</dbReference>
<dbReference type="FunFam" id="3.40.50.720:FF:000023">
    <property type="entry name" value="Ketol-acid reductoisomerase (NADP(+))"/>
    <property type="match status" value="1"/>
</dbReference>
<dbReference type="Gene3D" id="6.10.240.10">
    <property type="match status" value="1"/>
</dbReference>
<dbReference type="Gene3D" id="3.40.50.720">
    <property type="entry name" value="NAD(P)-binding Rossmann-like Domain"/>
    <property type="match status" value="1"/>
</dbReference>
<dbReference type="HAMAP" id="MF_00435">
    <property type="entry name" value="IlvC"/>
    <property type="match status" value="1"/>
</dbReference>
<dbReference type="InterPro" id="IPR008927">
    <property type="entry name" value="6-PGluconate_DH-like_C_sf"/>
</dbReference>
<dbReference type="InterPro" id="IPR013023">
    <property type="entry name" value="KARI"/>
</dbReference>
<dbReference type="InterPro" id="IPR000506">
    <property type="entry name" value="KARI_C"/>
</dbReference>
<dbReference type="InterPro" id="IPR013116">
    <property type="entry name" value="KARI_N"/>
</dbReference>
<dbReference type="InterPro" id="IPR014359">
    <property type="entry name" value="KARI_prok"/>
</dbReference>
<dbReference type="InterPro" id="IPR036291">
    <property type="entry name" value="NAD(P)-bd_dom_sf"/>
</dbReference>
<dbReference type="NCBIfam" id="TIGR00465">
    <property type="entry name" value="ilvC"/>
    <property type="match status" value="1"/>
</dbReference>
<dbReference type="NCBIfam" id="NF004017">
    <property type="entry name" value="PRK05479.1"/>
    <property type="match status" value="1"/>
</dbReference>
<dbReference type="NCBIfam" id="NF009940">
    <property type="entry name" value="PRK13403.1"/>
    <property type="match status" value="1"/>
</dbReference>
<dbReference type="PANTHER" id="PTHR21371">
    <property type="entry name" value="KETOL-ACID REDUCTOISOMERASE, MITOCHONDRIAL"/>
    <property type="match status" value="1"/>
</dbReference>
<dbReference type="PANTHER" id="PTHR21371:SF1">
    <property type="entry name" value="KETOL-ACID REDUCTOISOMERASE, MITOCHONDRIAL"/>
    <property type="match status" value="1"/>
</dbReference>
<dbReference type="Pfam" id="PF01450">
    <property type="entry name" value="KARI_C"/>
    <property type="match status" value="1"/>
</dbReference>
<dbReference type="Pfam" id="PF07991">
    <property type="entry name" value="KARI_N"/>
    <property type="match status" value="1"/>
</dbReference>
<dbReference type="PIRSF" id="PIRSF000116">
    <property type="entry name" value="IlvC_gammaproteo"/>
    <property type="match status" value="1"/>
</dbReference>
<dbReference type="SUPFAM" id="SSF48179">
    <property type="entry name" value="6-phosphogluconate dehydrogenase C-terminal domain-like"/>
    <property type="match status" value="1"/>
</dbReference>
<dbReference type="SUPFAM" id="SSF51735">
    <property type="entry name" value="NAD(P)-binding Rossmann-fold domains"/>
    <property type="match status" value="1"/>
</dbReference>
<dbReference type="PROSITE" id="PS51851">
    <property type="entry name" value="KARI_C"/>
    <property type="match status" value="1"/>
</dbReference>
<dbReference type="PROSITE" id="PS51850">
    <property type="entry name" value="KARI_N"/>
    <property type="match status" value="1"/>
</dbReference>
<comment type="function">
    <text evidence="1">Involved in the biosynthesis of branched-chain amino acids (BCAA). Catalyzes an alkyl-migration followed by a ketol-acid reduction of (S)-2-acetolactate (S2AL) to yield (R)-2,3-dihydroxy-isovalerate. In the isomerase reaction, S2AL is rearranged via a Mg-dependent methyl migration to produce 3-hydroxy-3-methyl-2-ketobutyrate (HMKB). In the reductase reaction, this 2-ketoacid undergoes a metal-dependent reduction by NADPH to yield (R)-2,3-dihydroxy-isovalerate.</text>
</comment>
<comment type="catalytic activity">
    <reaction evidence="1">
        <text>(2R)-2,3-dihydroxy-3-methylbutanoate + NADP(+) = (2S)-2-acetolactate + NADPH + H(+)</text>
        <dbReference type="Rhea" id="RHEA:22068"/>
        <dbReference type="ChEBI" id="CHEBI:15378"/>
        <dbReference type="ChEBI" id="CHEBI:49072"/>
        <dbReference type="ChEBI" id="CHEBI:57783"/>
        <dbReference type="ChEBI" id="CHEBI:58349"/>
        <dbReference type="ChEBI" id="CHEBI:58476"/>
        <dbReference type="EC" id="1.1.1.86"/>
    </reaction>
</comment>
<comment type="catalytic activity">
    <reaction evidence="1">
        <text>(2R,3R)-2,3-dihydroxy-3-methylpentanoate + NADP(+) = (S)-2-ethyl-2-hydroxy-3-oxobutanoate + NADPH + H(+)</text>
        <dbReference type="Rhea" id="RHEA:13493"/>
        <dbReference type="ChEBI" id="CHEBI:15378"/>
        <dbReference type="ChEBI" id="CHEBI:49256"/>
        <dbReference type="ChEBI" id="CHEBI:49258"/>
        <dbReference type="ChEBI" id="CHEBI:57783"/>
        <dbReference type="ChEBI" id="CHEBI:58349"/>
        <dbReference type="EC" id="1.1.1.86"/>
    </reaction>
</comment>
<comment type="cofactor">
    <cofactor evidence="1">
        <name>Mg(2+)</name>
        <dbReference type="ChEBI" id="CHEBI:18420"/>
    </cofactor>
    <text evidence="1">Binds 2 magnesium ions per subunit.</text>
</comment>
<comment type="pathway">
    <text evidence="1">Amino-acid biosynthesis; L-isoleucine biosynthesis; L-isoleucine from 2-oxobutanoate: step 2/4.</text>
</comment>
<comment type="pathway">
    <text evidence="1">Amino-acid biosynthesis; L-valine biosynthesis; L-valine from pyruvate: step 2/4.</text>
</comment>
<comment type="similarity">
    <text evidence="1">Belongs to the ketol-acid reductoisomerase family.</text>
</comment>
<evidence type="ECO:0000255" key="1">
    <source>
        <dbReference type="HAMAP-Rule" id="MF_00435"/>
    </source>
</evidence>
<evidence type="ECO:0000255" key="2">
    <source>
        <dbReference type="PROSITE-ProRule" id="PRU01197"/>
    </source>
</evidence>
<evidence type="ECO:0000255" key="3">
    <source>
        <dbReference type="PROSITE-ProRule" id="PRU01198"/>
    </source>
</evidence>
<reference key="1">
    <citation type="journal article" date="2008" name="J. Bacteriol.">
        <title>Genome sequence of the fish pathogen Renibacterium salmoninarum suggests reductive evolution away from an environmental Arthrobacter ancestor.</title>
        <authorList>
            <person name="Wiens G.D."/>
            <person name="Rockey D.D."/>
            <person name="Wu Z."/>
            <person name="Chang J."/>
            <person name="Levy R."/>
            <person name="Crane S."/>
            <person name="Chen D.S."/>
            <person name="Capri G.R."/>
            <person name="Burnett J.R."/>
            <person name="Sudheesh P.S."/>
            <person name="Schipma M.J."/>
            <person name="Burd H."/>
            <person name="Bhattacharyya A."/>
            <person name="Rhodes L.D."/>
            <person name="Kaul R."/>
            <person name="Strom M.S."/>
        </authorList>
    </citation>
    <scope>NUCLEOTIDE SEQUENCE [LARGE SCALE GENOMIC DNA]</scope>
    <source>
        <strain>ATCC 33209 / DSM 20767 / JCM 11484 / NBRC 15589 / NCIMB 2235</strain>
    </source>
</reference>
<sequence>MTELFYDDDADLSIIQGRTVAVIGYGSQGHAHALSLRDSGVDVRVGLAEGSQSRAKAEAEGLRVLNVAEAVAEADVIMVLTPDQVQRHVYAESIAANLQAGDALFFGHGFNIRYGYIQPPADVDVALVAPKGPGHIVRREFEAGRGVPDLIAVEQDPSGNAWALALSYAKAIGGTRAGVIKTTFTEETETDLFGEQAVLCGGASQLIQYGFETLTEAGYKPEVAYFEVLHELKLIVDLMVEGGIAKQRWSVSDTAEYGDYVSGPLVIDAHVKDNMKAVLKDIQDGTFAKRFIDDQDAGAPEFKALRAKGEQHPIETTGRELRKLFSWIQNDDDYTEGSVAR</sequence>
<feature type="chain" id="PRO_1000080640" description="Ketol-acid reductoisomerase (NADP(+))">
    <location>
        <begin position="1"/>
        <end position="341"/>
    </location>
</feature>
<feature type="domain" description="KARI N-terminal Rossmann" evidence="2">
    <location>
        <begin position="1"/>
        <end position="182"/>
    </location>
</feature>
<feature type="domain" description="KARI C-terminal knotted" evidence="3">
    <location>
        <begin position="183"/>
        <end position="328"/>
    </location>
</feature>
<feature type="active site" evidence="1">
    <location>
        <position position="108"/>
    </location>
</feature>
<feature type="binding site" evidence="1">
    <location>
        <begin position="25"/>
        <end position="28"/>
    </location>
    <ligand>
        <name>NADP(+)</name>
        <dbReference type="ChEBI" id="CHEBI:58349"/>
    </ligand>
</feature>
<feature type="binding site" evidence="1">
    <location>
        <position position="51"/>
    </location>
    <ligand>
        <name>NADP(+)</name>
        <dbReference type="ChEBI" id="CHEBI:58349"/>
    </ligand>
</feature>
<feature type="binding site" evidence="1">
    <location>
        <position position="53"/>
    </location>
    <ligand>
        <name>NADP(+)</name>
        <dbReference type="ChEBI" id="CHEBI:58349"/>
    </ligand>
</feature>
<feature type="binding site" evidence="1">
    <location>
        <begin position="83"/>
        <end position="86"/>
    </location>
    <ligand>
        <name>NADP(+)</name>
        <dbReference type="ChEBI" id="CHEBI:58349"/>
    </ligand>
</feature>
<feature type="binding site" evidence="1">
    <location>
        <position position="134"/>
    </location>
    <ligand>
        <name>NADP(+)</name>
        <dbReference type="ChEBI" id="CHEBI:58349"/>
    </ligand>
</feature>
<feature type="binding site" evidence="1">
    <location>
        <position position="191"/>
    </location>
    <ligand>
        <name>Mg(2+)</name>
        <dbReference type="ChEBI" id="CHEBI:18420"/>
        <label>1</label>
    </ligand>
</feature>
<feature type="binding site" evidence="1">
    <location>
        <position position="191"/>
    </location>
    <ligand>
        <name>Mg(2+)</name>
        <dbReference type="ChEBI" id="CHEBI:18420"/>
        <label>2</label>
    </ligand>
</feature>
<feature type="binding site" evidence="1">
    <location>
        <position position="195"/>
    </location>
    <ligand>
        <name>Mg(2+)</name>
        <dbReference type="ChEBI" id="CHEBI:18420"/>
        <label>1</label>
    </ligand>
</feature>
<feature type="binding site" evidence="1">
    <location>
        <position position="227"/>
    </location>
    <ligand>
        <name>Mg(2+)</name>
        <dbReference type="ChEBI" id="CHEBI:18420"/>
        <label>2</label>
    </ligand>
</feature>
<feature type="binding site" evidence="1">
    <location>
        <position position="231"/>
    </location>
    <ligand>
        <name>Mg(2+)</name>
        <dbReference type="ChEBI" id="CHEBI:18420"/>
        <label>2</label>
    </ligand>
</feature>
<feature type="binding site" evidence="1">
    <location>
        <position position="252"/>
    </location>
    <ligand>
        <name>substrate</name>
    </ligand>
</feature>
<gene>
    <name evidence="1" type="primary">ilvC</name>
    <name type="ordered locus">RSal33209_1045</name>
</gene>
<accession>A9WP08</accession>
<name>ILVC_RENSM</name>
<protein>
    <recommendedName>
        <fullName evidence="1">Ketol-acid reductoisomerase (NADP(+))</fullName>
        <shortName evidence="1">KARI</shortName>
        <ecNumber evidence="1">1.1.1.86</ecNumber>
    </recommendedName>
    <alternativeName>
        <fullName evidence="1">Acetohydroxy-acid isomeroreductase</fullName>
        <shortName evidence="1">AHIR</shortName>
    </alternativeName>
    <alternativeName>
        <fullName evidence="1">Alpha-keto-beta-hydroxylacyl reductoisomerase</fullName>
    </alternativeName>
    <alternativeName>
        <fullName evidence="1">Ketol-acid reductoisomerase type 1</fullName>
    </alternativeName>
    <alternativeName>
        <fullName evidence="1">Ketol-acid reductoisomerase type I</fullName>
    </alternativeName>
</protein>